<dbReference type="EMBL" id="AE017333">
    <property type="protein sequence ID" value="AAU39965.1"/>
    <property type="status" value="ALT_INIT"/>
    <property type="molecule type" value="Genomic_DNA"/>
</dbReference>
<dbReference type="EMBL" id="CP000002">
    <property type="protein sequence ID" value="AAU22622.1"/>
    <property type="molecule type" value="Genomic_DNA"/>
</dbReference>
<dbReference type="RefSeq" id="WP_011197703.1">
    <property type="nucleotide sequence ID" value="NC_006322.1"/>
</dbReference>
<dbReference type="SMR" id="Q65LU9"/>
<dbReference type="STRING" id="279010.BL02871"/>
<dbReference type="KEGG" id="bld:BLi01057"/>
<dbReference type="KEGG" id="bli:BL02871"/>
<dbReference type="eggNOG" id="COG4399">
    <property type="taxonomic scope" value="Bacteria"/>
</dbReference>
<dbReference type="HOGENOM" id="CLU_042384_0_0_9"/>
<dbReference type="Proteomes" id="UP000000606">
    <property type="component" value="Chromosome"/>
</dbReference>
<dbReference type="GO" id="GO:0005886">
    <property type="term" value="C:plasma membrane"/>
    <property type="evidence" value="ECO:0007669"/>
    <property type="project" value="UniProtKB-SubCell"/>
</dbReference>
<dbReference type="InterPro" id="IPR007383">
    <property type="entry name" value="DUF445"/>
</dbReference>
<dbReference type="InterPro" id="IPR016991">
    <property type="entry name" value="UCP032178"/>
</dbReference>
<dbReference type="PANTHER" id="PTHR35791">
    <property type="entry name" value="UPF0754 MEMBRANE PROTEIN YHEB"/>
    <property type="match status" value="1"/>
</dbReference>
<dbReference type="PANTHER" id="PTHR35791:SF1">
    <property type="entry name" value="UPF0754 MEMBRANE PROTEIN YHEB"/>
    <property type="match status" value="1"/>
</dbReference>
<dbReference type="Pfam" id="PF04286">
    <property type="entry name" value="DUF445"/>
    <property type="match status" value="1"/>
</dbReference>
<dbReference type="PIRSF" id="PIRSF032178">
    <property type="entry name" value="UCP032178"/>
    <property type="match status" value="1"/>
</dbReference>
<sequence length="376" mass="42554">MYVFGIFAVMIAVGALIGAVTNHFAIKMLFRPYKAIYIFGKRVPFTPGLIPKRRDELARQMGQMVTGHLLTTEGLKKRLASDAVKSQAVQVGERLLARLSQSTATVEEALESIGISNPAQKADRAVSRLADEKLTAFLEAYENEPLKKLFPLEAQEKLKEKIPMVSSYILSRAVSYFESDEGKERLGHMIDDFLKERGMLGSMVQMFLGNSSLVDRVQPEIVKFLKNGETAGLLQDLLENEWDKLKEYTFKEADDKWNLKPLIFDLKEKLLKRFSLQPFFEKTIGSSISSFEQDIALRLPQMADRLLEEAGRRLDQALKQLELEQIVKEQVDNFPVERLEEMVLSISKREFKMITYLGGLLGGIIGAVQAIFVILI</sequence>
<name>Y1057_BACLD</name>
<accession>Q65LU9</accession>
<accession>Q62X86</accession>
<organism>
    <name type="scientific">Bacillus licheniformis (strain ATCC 14580 / DSM 13 / JCM 2505 / CCUG 7422 / NBRC 12200 / NCIMB 9375 / NCTC 10341 / NRRL NRS-1264 / Gibson 46)</name>
    <dbReference type="NCBI Taxonomy" id="279010"/>
    <lineage>
        <taxon>Bacteria</taxon>
        <taxon>Bacillati</taxon>
        <taxon>Bacillota</taxon>
        <taxon>Bacilli</taxon>
        <taxon>Bacillales</taxon>
        <taxon>Bacillaceae</taxon>
        <taxon>Bacillus</taxon>
    </lineage>
</organism>
<evidence type="ECO:0000250" key="1"/>
<evidence type="ECO:0000255" key="2"/>
<evidence type="ECO:0000305" key="3"/>
<feature type="chain" id="PRO_0000388280" description="UPF0754 membrane protein BLi01057/BL02871">
    <location>
        <begin position="1"/>
        <end position="376"/>
    </location>
</feature>
<feature type="transmembrane region" description="Helical" evidence="2">
    <location>
        <begin position="1"/>
        <end position="21"/>
    </location>
</feature>
<feature type="transmembrane region" description="Helical" evidence="2">
    <location>
        <begin position="356"/>
        <end position="376"/>
    </location>
</feature>
<gene>
    <name type="ordered locus">BLi01057</name>
    <name type="ordered locus">BL02871</name>
</gene>
<protein>
    <recommendedName>
        <fullName>UPF0754 membrane protein BLi01057/BL02871</fullName>
    </recommendedName>
</protein>
<reference key="1">
    <citation type="journal article" date="2004" name="J. Mol. Microbiol. Biotechnol.">
        <title>The complete genome sequence of Bacillus licheniformis DSM13, an organism with great industrial potential.</title>
        <authorList>
            <person name="Veith B."/>
            <person name="Herzberg C."/>
            <person name="Steckel S."/>
            <person name="Feesche J."/>
            <person name="Maurer K.H."/>
            <person name="Ehrenreich P."/>
            <person name="Baeumer S."/>
            <person name="Henne A."/>
            <person name="Liesegang H."/>
            <person name="Merkl R."/>
            <person name="Ehrenreich A."/>
            <person name="Gottschalk G."/>
        </authorList>
    </citation>
    <scope>NUCLEOTIDE SEQUENCE [LARGE SCALE GENOMIC DNA]</scope>
    <source>
        <strain>ATCC 14580 / DSM 13 / JCM 2505 / CCUG 7422 / NBRC 12200 / NCIMB 9375 / NCTC 10341 / NRRL NRS-1264 / Gibson 46</strain>
    </source>
</reference>
<reference key="2">
    <citation type="journal article" date="2004" name="Genome Biol.">
        <title>Complete genome sequence of the industrial bacterium Bacillus licheniformis and comparisons with closely related Bacillus species.</title>
        <authorList>
            <person name="Rey M.W."/>
            <person name="Ramaiya P."/>
            <person name="Nelson B.A."/>
            <person name="Brody-Karpin S.D."/>
            <person name="Zaretsky E.J."/>
            <person name="Tang M."/>
            <person name="Lopez de Leon A."/>
            <person name="Xiang H."/>
            <person name="Gusti V."/>
            <person name="Clausen I.G."/>
            <person name="Olsen P.B."/>
            <person name="Rasmussen M.D."/>
            <person name="Andersen J.T."/>
            <person name="Joergensen P.L."/>
            <person name="Larsen T.S."/>
            <person name="Sorokin A."/>
            <person name="Bolotin A."/>
            <person name="Lapidus A."/>
            <person name="Galleron N."/>
            <person name="Ehrlich S.D."/>
            <person name="Berka R.M."/>
        </authorList>
    </citation>
    <scope>NUCLEOTIDE SEQUENCE [LARGE SCALE GENOMIC DNA]</scope>
    <source>
        <strain>ATCC 14580 / DSM 13 / JCM 2505 / CCUG 7422 / NBRC 12200 / NCIMB 9375 / NCTC 10341 / NRRL NRS-1264 / Gibson 46</strain>
    </source>
</reference>
<proteinExistence type="inferred from homology"/>
<keyword id="KW-1003">Cell membrane</keyword>
<keyword id="KW-0472">Membrane</keyword>
<keyword id="KW-1185">Reference proteome</keyword>
<keyword id="KW-0812">Transmembrane</keyword>
<keyword id="KW-1133">Transmembrane helix</keyword>
<comment type="subcellular location">
    <subcellularLocation>
        <location evidence="1">Cell membrane</location>
        <topology evidence="1">Multi-pass membrane protein</topology>
    </subcellularLocation>
</comment>
<comment type="similarity">
    <text evidence="3">Belongs to the UPF0754 family.</text>
</comment>
<comment type="sequence caution" evidence="3">
    <conflict type="erroneous initiation">
        <sequence resource="EMBL-CDS" id="AAU39965"/>
    </conflict>
</comment>